<comment type="function">
    <text evidence="1">Catalyzes the conversion of oxaloacetate (OAA) to phosphoenolpyruvate (PEP), the rate-limiting step in the metabolic pathway that produces glucose from lactate and other precursors derived from the citric acid cycle.</text>
</comment>
<comment type="catalytic activity">
    <reaction evidence="1">
        <text>oxaloacetate + GTP = phosphoenolpyruvate + GDP + CO2</text>
        <dbReference type="Rhea" id="RHEA:10388"/>
        <dbReference type="ChEBI" id="CHEBI:16452"/>
        <dbReference type="ChEBI" id="CHEBI:16526"/>
        <dbReference type="ChEBI" id="CHEBI:37565"/>
        <dbReference type="ChEBI" id="CHEBI:58189"/>
        <dbReference type="ChEBI" id="CHEBI:58702"/>
        <dbReference type="EC" id="4.1.1.32"/>
    </reaction>
</comment>
<comment type="cofactor">
    <cofactor evidence="1">
        <name>Mn(2+)</name>
        <dbReference type="ChEBI" id="CHEBI:29035"/>
    </cofactor>
    <text evidence="1">Binds 1 Mn(2+) ion per subunit.</text>
</comment>
<comment type="pathway">
    <text evidence="1">Carbohydrate biosynthesis; gluconeogenesis.</text>
</comment>
<comment type="subunit">
    <text evidence="1">Monomer.</text>
</comment>
<comment type="subcellular location">
    <subcellularLocation>
        <location evidence="1">Cytoplasm</location>
    </subcellularLocation>
</comment>
<comment type="similarity">
    <text evidence="1">Belongs to the phosphoenolpyruvate carboxykinase [GTP] family.</text>
</comment>
<organism>
    <name type="scientific">Salinispora tropica (strain ATCC BAA-916 / DSM 44818 / JCM 13857 / NBRC 105044 / CNB-440)</name>
    <dbReference type="NCBI Taxonomy" id="369723"/>
    <lineage>
        <taxon>Bacteria</taxon>
        <taxon>Bacillati</taxon>
        <taxon>Actinomycetota</taxon>
        <taxon>Actinomycetes</taxon>
        <taxon>Micromonosporales</taxon>
        <taxon>Micromonosporaceae</taxon>
        <taxon>Salinispora</taxon>
    </lineage>
</organism>
<name>PCKG_SALTO</name>
<gene>
    <name evidence="1" type="primary">pckG</name>
    <name type="ordered locus">Strop_0861</name>
</gene>
<proteinExistence type="inferred from homology"/>
<keyword id="KW-0963">Cytoplasm</keyword>
<keyword id="KW-0210">Decarboxylase</keyword>
<keyword id="KW-0312">Gluconeogenesis</keyword>
<keyword id="KW-0342">GTP-binding</keyword>
<keyword id="KW-0456">Lyase</keyword>
<keyword id="KW-0464">Manganese</keyword>
<keyword id="KW-0479">Metal-binding</keyword>
<keyword id="KW-0547">Nucleotide-binding</keyword>
<keyword id="KW-1185">Reference proteome</keyword>
<accession>A4X388</accession>
<feature type="chain" id="PRO_1000080989" description="Phosphoenolpyruvate carboxykinase [GTP]">
    <location>
        <begin position="1"/>
        <end position="612"/>
    </location>
</feature>
<feature type="active site" evidence="1">
    <location>
        <position position="274"/>
    </location>
</feature>
<feature type="binding site" evidence="1">
    <location>
        <position position="82"/>
    </location>
    <ligand>
        <name>substrate</name>
    </ligand>
</feature>
<feature type="binding site" evidence="1">
    <location>
        <begin position="221"/>
        <end position="223"/>
    </location>
    <ligand>
        <name>substrate</name>
    </ligand>
</feature>
<feature type="binding site" evidence="1">
    <location>
        <position position="230"/>
    </location>
    <ligand>
        <name>Mn(2+)</name>
        <dbReference type="ChEBI" id="CHEBI:29035"/>
    </ligand>
</feature>
<feature type="binding site" evidence="1">
    <location>
        <position position="250"/>
    </location>
    <ligand>
        <name>Mn(2+)</name>
        <dbReference type="ChEBI" id="CHEBI:29035"/>
    </ligand>
</feature>
<feature type="binding site" evidence="1">
    <location>
        <position position="272"/>
    </location>
    <ligand>
        <name>substrate</name>
    </ligand>
</feature>
<feature type="binding site" evidence="1">
    <location>
        <begin position="273"/>
        <end position="278"/>
    </location>
    <ligand>
        <name>GTP</name>
        <dbReference type="ChEBI" id="CHEBI:37565"/>
    </ligand>
</feature>
<feature type="binding site" evidence="1">
    <location>
        <position position="297"/>
    </location>
    <ligand>
        <name>Mn(2+)</name>
        <dbReference type="ChEBI" id="CHEBI:29035"/>
    </ligand>
</feature>
<feature type="binding site" evidence="1">
    <location>
        <begin position="387"/>
        <end position="389"/>
    </location>
    <ligand>
        <name>substrate</name>
    </ligand>
</feature>
<feature type="binding site" evidence="1">
    <location>
        <position position="389"/>
    </location>
    <ligand>
        <name>GTP</name>
        <dbReference type="ChEBI" id="CHEBI:37565"/>
    </ligand>
</feature>
<feature type="binding site" evidence="1">
    <location>
        <position position="420"/>
    </location>
    <ligand>
        <name>GTP</name>
        <dbReference type="ChEBI" id="CHEBI:37565"/>
    </ligand>
</feature>
<feature type="binding site" evidence="1">
    <location>
        <begin position="517"/>
        <end position="520"/>
    </location>
    <ligand>
        <name>GTP</name>
        <dbReference type="ChEBI" id="CHEBI:37565"/>
    </ligand>
</feature>
<evidence type="ECO:0000255" key="1">
    <source>
        <dbReference type="HAMAP-Rule" id="MF_00452"/>
    </source>
</evidence>
<protein>
    <recommendedName>
        <fullName evidence="1">Phosphoenolpyruvate carboxykinase [GTP]</fullName>
        <shortName evidence="1">PEP carboxykinase</shortName>
        <shortName evidence="1">PEPCK</shortName>
        <ecNumber evidence="1">4.1.1.32</ecNumber>
    </recommendedName>
</protein>
<sequence>MVAPATVRGIDQAPTSHPKLLAWVREIAELTTPDRVVWADGSEEEWRRITDELVEAGTLVRLNPEKKRNSFYARTDPTDVARVEERTFICSVDEADAGPTNNWMAPAEMKRTMTELYRGCMRGRTMYVIPFCMGPVEAKNPMFGIEITDSPYVVASMRIMTRMGTKILEAMGDDADFVHALHSIGAPLAPGQQDVSWPCNETKYISHFPETREIWSYGSGYGGNSLLGKKCYSLRIASVMGRDEGWLAEHMLILKITSPEGRAYHIAGAFPSACGKTNLAMLEPTIPGWKVETVGDDIAWMRFGPDGRLYAVNPEYGLFGVAPGTDWKTNANAMRTLDRGNSIFTNVALTDDGDIWWEGMGEPPTHLIDWKGNDWTPQSEHLSSHANSRFCTPITQCPILAEDYYDPNGVPIDAILFGGRRRDTVPLVTEARDWVHGVYLGATLSSETTAAASGAVGVVRRDPMAMLPFIGYNAGDYFRHWIEMGKGTDGDESKLPSVYYVNWFRKDAEGSFLWPGFGENSRVLKWIVERLEGRAEAVETPIGMVPAEDALDVEGLDMTSEDIRIALKVDVNEWQAELPLVTEWFEKFGDKLPGVLWAELDALRARLDAEPQ</sequence>
<reference key="1">
    <citation type="journal article" date="2007" name="Proc. Natl. Acad. Sci. U.S.A.">
        <title>Genome sequencing reveals complex secondary metabolome in the marine actinomycete Salinispora tropica.</title>
        <authorList>
            <person name="Udwary D.W."/>
            <person name="Zeigler L."/>
            <person name="Asolkar R.N."/>
            <person name="Singan V."/>
            <person name="Lapidus A."/>
            <person name="Fenical W."/>
            <person name="Jensen P.R."/>
            <person name="Moore B.S."/>
        </authorList>
    </citation>
    <scope>NUCLEOTIDE SEQUENCE [LARGE SCALE GENOMIC DNA]</scope>
    <source>
        <strain>ATCC BAA-916 / DSM 44818 / JCM 13857 / NBRC 105044 / CNB-440</strain>
    </source>
</reference>
<dbReference type="EC" id="4.1.1.32" evidence="1"/>
<dbReference type="EMBL" id="CP000667">
    <property type="protein sequence ID" value="ABP53338.1"/>
    <property type="molecule type" value="Genomic_DNA"/>
</dbReference>
<dbReference type="RefSeq" id="WP_011904772.1">
    <property type="nucleotide sequence ID" value="NC_009380.1"/>
</dbReference>
<dbReference type="SMR" id="A4X388"/>
<dbReference type="STRING" id="369723.Strop_0861"/>
<dbReference type="KEGG" id="stp:Strop_0861"/>
<dbReference type="PATRIC" id="fig|369723.5.peg.879"/>
<dbReference type="eggNOG" id="COG1274">
    <property type="taxonomic scope" value="Bacteria"/>
</dbReference>
<dbReference type="HOGENOM" id="CLU_028872_1_1_11"/>
<dbReference type="UniPathway" id="UPA00138"/>
<dbReference type="Proteomes" id="UP000000235">
    <property type="component" value="Chromosome"/>
</dbReference>
<dbReference type="GO" id="GO:0005829">
    <property type="term" value="C:cytosol"/>
    <property type="evidence" value="ECO:0007669"/>
    <property type="project" value="TreeGrafter"/>
</dbReference>
<dbReference type="GO" id="GO:0005525">
    <property type="term" value="F:GTP binding"/>
    <property type="evidence" value="ECO:0007669"/>
    <property type="project" value="UniProtKB-UniRule"/>
</dbReference>
<dbReference type="GO" id="GO:0030145">
    <property type="term" value="F:manganese ion binding"/>
    <property type="evidence" value="ECO:0007669"/>
    <property type="project" value="UniProtKB-UniRule"/>
</dbReference>
<dbReference type="GO" id="GO:0004613">
    <property type="term" value="F:phosphoenolpyruvate carboxykinase (GTP) activity"/>
    <property type="evidence" value="ECO:0007669"/>
    <property type="project" value="UniProtKB-UniRule"/>
</dbReference>
<dbReference type="GO" id="GO:0071333">
    <property type="term" value="P:cellular response to glucose stimulus"/>
    <property type="evidence" value="ECO:0007669"/>
    <property type="project" value="TreeGrafter"/>
</dbReference>
<dbReference type="GO" id="GO:0006094">
    <property type="term" value="P:gluconeogenesis"/>
    <property type="evidence" value="ECO:0007669"/>
    <property type="project" value="UniProtKB-UniRule"/>
</dbReference>
<dbReference type="GO" id="GO:0046327">
    <property type="term" value="P:glycerol biosynthetic process from pyruvate"/>
    <property type="evidence" value="ECO:0007669"/>
    <property type="project" value="TreeGrafter"/>
</dbReference>
<dbReference type="GO" id="GO:0006107">
    <property type="term" value="P:oxaloacetate metabolic process"/>
    <property type="evidence" value="ECO:0007669"/>
    <property type="project" value="TreeGrafter"/>
</dbReference>
<dbReference type="GO" id="GO:0019543">
    <property type="term" value="P:propionate catabolic process"/>
    <property type="evidence" value="ECO:0007669"/>
    <property type="project" value="TreeGrafter"/>
</dbReference>
<dbReference type="GO" id="GO:0033993">
    <property type="term" value="P:response to lipid"/>
    <property type="evidence" value="ECO:0007669"/>
    <property type="project" value="TreeGrafter"/>
</dbReference>
<dbReference type="GO" id="GO:0042594">
    <property type="term" value="P:response to starvation"/>
    <property type="evidence" value="ECO:0007669"/>
    <property type="project" value="TreeGrafter"/>
</dbReference>
<dbReference type="CDD" id="cd00819">
    <property type="entry name" value="PEPCK_GTP"/>
    <property type="match status" value="1"/>
</dbReference>
<dbReference type="FunFam" id="3.40.449.10:FF:000005">
    <property type="entry name" value="Phosphoenolpyruvate carboxykinase [GTP]"/>
    <property type="match status" value="1"/>
</dbReference>
<dbReference type="Gene3D" id="3.90.228.20">
    <property type="match status" value="1"/>
</dbReference>
<dbReference type="Gene3D" id="3.40.449.10">
    <property type="entry name" value="Phosphoenolpyruvate Carboxykinase, domain 1"/>
    <property type="match status" value="1"/>
</dbReference>
<dbReference type="Gene3D" id="2.170.8.10">
    <property type="entry name" value="Phosphoenolpyruvate Carboxykinase, domain 2"/>
    <property type="match status" value="1"/>
</dbReference>
<dbReference type="HAMAP" id="MF_00452">
    <property type="entry name" value="PEPCK_GTP"/>
    <property type="match status" value="1"/>
</dbReference>
<dbReference type="InterPro" id="IPR018091">
    <property type="entry name" value="PEP_carboxykin_GTP_CS"/>
</dbReference>
<dbReference type="InterPro" id="IPR013035">
    <property type="entry name" value="PEP_carboxykinase_C"/>
</dbReference>
<dbReference type="InterPro" id="IPR008209">
    <property type="entry name" value="PEP_carboxykinase_GTP"/>
</dbReference>
<dbReference type="InterPro" id="IPR035077">
    <property type="entry name" value="PEP_carboxykinase_GTP_C"/>
</dbReference>
<dbReference type="InterPro" id="IPR035078">
    <property type="entry name" value="PEP_carboxykinase_GTP_N"/>
</dbReference>
<dbReference type="InterPro" id="IPR008210">
    <property type="entry name" value="PEP_carboxykinase_N"/>
</dbReference>
<dbReference type="NCBIfam" id="NF003253">
    <property type="entry name" value="PRK04210.1"/>
    <property type="match status" value="1"/>
</dbReference>
<dbReference type="PANTHER" id="PTHR11561">
    <property type="entry name" value="PHOSPHOENOLPYRUVATE CARBOXYKINASE"/>
    <property type="match status" value="1"/>
</dbReference>
<dbReference type="PANTHER" id="PTHR11561:SF0">
    <property type="entry name" value="PHOSPHOENOLPYRUVATE CARBOXYKINASE [GTP]-RELATED"/>
    <property type="match status" value="1"/>
</dbReference>
<dbReference type="Pfam" id="PF00821">
    <property type="entry name" value="PEPCK_GTP"/>
    <property type="match status" value="1"/>
</dbReference>
<dbReference type="Pfam" id="PF17297">
    <property type="entry name" value="PEPCK_N"/>
    <property type="match status" value="1"/>
</dbReference>
<dbReference type="PIRSF" id="PIRSF001348">
    <property type="entry name" value="PEP_carboxykinase_GTP"/>
    <property type="match status" value="1"/>
</dbReference>
<dbReference type="SUPFAM" id="SSF68923">
    <property type="entry name" value="PEP carboxykinase N-terminal domain"/>
    <property type="match status" value="1"/>
</dbReference>
<dbReference type="SUPFAM" id="SSF53795">
    <property type="entry name" value="PEP carboxykinase-like"/>
    <property type="match status" value="1"/>
</dbReference>
<dbReference type="PROSITE" id="PS00505">
    <property type="entry name" value="PEPCK_GTP"/>
    <property type="match status" value="1"/>
</dbReference>